<comment type="function">
    <text>May play a dynamic role in flagellar motility.</text>
</comment>
<comment type="PTM">
    <text>May undergo some post-translational modifications that shift its mobility on SDS gels.</text>
</comment>
<comment type="similarity">
    <text evidence="3">Belongs to the inner dynein arm light chain family.</text>
</comment>
<name>IDLC_STRPU</name>
<protein>
    <recommendedName>
        <fullName>33 kDa inner dynein arm light chain, axonemal</fullName>
    </recommendedName>
    <alternativeName>
        <fullName>p33</fullName>
    </alternativeName>
</protein>
<accession>Q26630</accession>
<reference key="1">
    <citation type="journal article" date="1996" name="J. Biol. Chem.">
        <title>Purification, cloning, and sequence analysis of a Mr = 30,000 protein from sea urchin axonemes that is important for sperm motility. Relationship of the protein to a dynein light chain.</title>
        <authorList>
            <person name="Gingras D."/>
            <person name="White D."/>
            <person name="Garin J."/>
            <person name="Multigner L."/>
            <person name="Job D."/>
            <person name="Cosson J."/>
            <person name="Huitorel P."/>
            <person name="Zingg H."/>
            <person name="Dumas F."/>
            <person name="Gagnon C."/>
        </authorList>
    </citation>
    <scope>NUCLEOTIDE SEQUENCE [MRNA]</scope>
    <scope>PROTEIN SEQUENCE OF 1-23; 192-213; 232-241 AND 248-259</scope>
</reference>
<keyword id="KW-0175">Coiled coil</keyword>
<keyword id="KW-0903">Direct protein sequencing</keyword>
<keyword id="KW-0243">Dynein</keyword>
<keyword id="KW-0505">Motor protein</keyword>
<keyword id="KW-1185">Reference proteome</keyword>
<organism>
    <name type="scientific">Strongylocentrotus purpuratus</name>
    <name type="common">Purple sea urchin</name>
    <dbReference type="NCBI Taxonomy" id="7668"/>
    <lineage>
        <taxon>Eukaryota</taxon>
        <taxon>Metazoa</taxon>
        <taxon>Echinodermata</taxon>
        <taxon>Eleutherozoa</taxon>
        <taxon>Echinozoa</taxon>
        <taxon>Echinoidea</taxon>
        <taxon>Euechinoidea</taxon>
        <taxon>Echinacea</taxon>
        <taxon>Camarodonta</taxon>
        <taxon>Echinidea</taxon>
        <taxon>Strongylocentrotidae</taxon>
        <taxon>Strongylocentrotus</taxon>
    </lineage>
</organism>
<proteinExistence type="evidence at protein level"/>
<feature type="chain" id="PRO_0000114680" description="33 kDa inner dynein arm light chain, axonemal">
    <location>
        <begin position="1"/>
        <end position="260"/>
    </location>
</feature>
<feature type="region of interest" description="Disordered" evidence="2">
    <location>
        <begin position="1"/>
        <end position="66"/>
    </location>
</feature>
<feature type="coiled-coil region" evidence="1">
    <location>
        <begin position="177"/>
        <end position="260"/>
    </location>
</feature>
<sequence length="260" mass="29732">MIPPNASLVKYDNPVLVSRNTEKKTPRARALKTSPQQPTNAGPVPNPPPKGGSKLPPVESQKAQQTDEILNSILPPREWTESGQLWVQQVSSTPATRLDVVNLQEQLDMRLQQRQARETGICPVRRELYSQCFDELIRQVTIECAERGLLLLRVRDEIRMTIAAYQTLYESSVAFGMRKALQAEQGKSDMEKKITDLGQEKRELERQVNELKAKCEAIEKREAERRQVEEKKHAEEIQFLKRTNQQLKTQLEGIIAPNKK</sequence>
<dbReference type="EMBL" id="U47278">
    <property type="protein sequence ID" value="AAC47111.1"/>
    <property type="molecule type" value="mRNA"/>
</dbReference>
<dbReference type="RefSeq" id="NP_999680.1">
    <property type="nucleotide sequence ID" value="NM_214515.2"/>
</dbReference>
<dbReference type="SMR" id="Q26630"/>
<dbReference type="FunCoup" id="Q26630">
    <property type="interactions" value="186"/>
</dbReference>
<dbReference type="STRING" id="7668.Q26630"/>
<dbReference type="EnsemblMetazoa" id="NM_214515">
    <property type="protein sequence ID" value="NP_999680"/>
    <property type="gene ID" value="LOC373273"/>
</dbReference>
<dbReference type="GeneID" id="373273"/>
<dbReference type="KEGG" id="spu:373273"/>
<dbReference type="CTD" id="7802"/>
<dbReference type="eggNOG" id="KOG4001">
    <property type="taxonomic scope" value="Eukaryota"/>
</dbReference>
<dbReference type="HOGENOM" id="CLU_072652_0_0_1"/>
<dbReference type="InParanoid" id="Q26630"/>
<dbReference type="OMA" id="QVTIICA"/>
<dbReference type="OrthoDB" id="273640at2759"/>
<dbReference type="PhylomeDB" id="Q26630"/>
<dbReference type="Proteomes" id="UP000007110">
    <property type="component" value="Unassembled WGS sequence"/>
</dbReference>
<dbReference type="GO" id="GO:0005930">
    <property type="term" value="C:axoneme"/>
    <property type="evidence" value="ECO:0000318"/>
    <property type="project" value="GO_Central"/>
</dbReference>
<dbReference type="GO" id="GO:0097546">
    <property type="term" value="C:ciliary base"/>
    <property type="evidence" value="ECO:0000318"/>
    <property type="project" value="GO_Central"/>
</dbReference>
<dbReference type="GO" id="GO:0030286">
    <property type="term" value="C:dynein complex"/>
    <property type="evidence" value="ECO:0007669"/>
    <property type="project" value="UniProtKB-KW"/>
</dbReference>
<dbReference type="GO" id="GO:0045504">
    <property type="term" value="F:dynein heavy chain binding"/>
    <property type="evidence" value="ECO:0000318"/>
    <property type="project" value="GO_Central"/>
</dbReference>
<dbReference type="InterPro" id="IPR019347">
    <property type="entry name" value="Axonemal_dynein_light_chain"/>
</dbReference>
<dbReference type="PANTHER" id="PTHR13183:SF0">
    <property type="entry name" value="AXONEMAL DYNEIN LIGHT INTERMEDIATE POLYPEPTIDE 1"/>
    <property type="match status" value="1"/>
</dbReference>
<dbReference type="PANTHER" id="PTHR13183">
    <property type="entry name" value="AXONEMAL INNER ARM DYNEIN LIGHT CHAIN 28"/>
    <property type="match status" value="1"/>
</dbReference>
<dbReference type="Pfam" id="PF10211">
    <property type="entry name" value="Ax_dynein_light"/>
    <property type="match status" value="1"/>
</dbReference>
<evidence type="ECO:0000255" key="1"/>
<evidence type="ECO:0000256" key="2">
    <source>
        <dbReference type="SAM" id="MobiDB-lite"/>
    </source>
</evidence>
<evidence type="ECO:0000305" key="3"/>